<comment type="function">
    <text evidence="1">Involved in the biosynthesis of the chorismate, which leads to the biosynthesis of aromatic amino acids. Catalyzes the reversible NADPH linked reduction of 3-dehydroshikimate (DHSA) to yield shikimate (SA).</text>
</comment>
<comment type="catalytic activity">
    <reaction evidence="1">
        <text>shikimate + NADP(+) = 3-dehydroshikimate + NADPH + H(+)</text>
        <dbReference type="Rhea" id="RHEA:17737"/>
        <dbReference type="ChEBI" id="CHEBI:15378"/>
        <dbReference type="ChEBI" id="CHEBI:16630"/>
        <dbReference type="ChEBI" id="CHEBI:36208"/>
        <dbReference type="ChEBI" id="CHEBI:57783"/>
        <dbReference type="ChEBI" id="CHEBI:58349"/>
        <dbReference type="EC" id="1.1.1.25"/>
    </reaction>
</comment>
<comment type="pathway">
    <text evidence="1">Metabolic intermediate biosynthesis; chorismate biosynthesis; chorismate from D-erythrose 4-phosphate and phosphoenolpyruvate: step 4/7.</text>
</comment>
<comment type="subunit">
    <text evidence="1">Homodimer.</text>
</comment>
<comment type="similarity">
    <text evidence="1">Belongs to the shikimate dehydrogenase family.</text>
</comment>
<reference key="1">
    <citation type="journal article" date="2011" name="Stand. Genomic Sci.">
        <title>Complete genome sequence of 'Thioalkalivibrio sulfidophilus' HL-EbGr7.</title>
        <authorList>
            <person name="Muyzer G."/>
            <person name="Sorokin D.Y."/>
            <person name="Mavromatis K."/>
            <person name="Lapidus A."/>
            <person name="Clum A."/>
            <person name="Ivanova N."/>
            <person name="Pati A."/>
            <person name="d'Haeseleer P."/>
            <person name="Woyke T."/>
            <person name="Kyrpides N.C."/>
        </authorList>
    </citation>
    <scope>NUCLEOTIDE SEQUENCE [LARGE SCALE GENOMIC DNA]</scope>
    <source>
        <strain>HL-EbGR7</strain>
    </source>
</reference>
<dbReference type="EC" id="1.1.1.25" evidence="1"/>
<dbReference type="EMBL" id="CP001339">
    <property type="protein sequence ID" value="ACL71222.1"/>
    <property type="molecule type" value="Genomic_DNA"/>
</dbReference>
<dbReference type="RefSeq" id="WP_012636711.1">
    <property type="nucleotide sequence ID" value="NC_011901.1"/>
</dbReference>
<dbReference type="SMR" id="B8GTG2"/>
<dbReference type="STRING" id="396588.Tgr7_0119"/>
<dbReference type="KEGG" id="tgr:Tgr7_0119"/>
<dbReference type="eggNOG" id="COG0169">
    <property type="taxonomic scope" value="Bacteria"/>
</dbReference>
<dbReference type="HOGENOM" id="CLU_044063_2_1_6"/>
<dbReference type="OrthoDB" id="9776868at2"/>
<dbReference type="UniPathway" id="UPA00053">
    <property type="reaction ID" value="UER00087"/>
</dbReference>
<dbReference type="Proteomes" id="UP000002383">
    <property type="component" value="Chromosome"/>
</dbReference>
<dbReference type="GO" id="GO:0005829">
    <property type="term" value="C:cytosol"/>
    <property type="evidence" value="ECO:0007669"/>
    <property type="project" value="TreeGrafter"/>
</dbReference>
<dbReference type="GO" id="GO:0050661">
    <property type="term" value="F:NADP binding"/>
    <property type="evidence" value="ECO:0007669"/>
    <property type="project" value="InterPro"/>
</dbReference>
<dbReference type="GO" id="GO:0004764">
    <property type="term" value="F:shikimate 3-dehydrogenase (NADP+) activity"/>
    <property type="evidence" value="ECO:0007669"/>
    <property type="project" value="UniProtKB-UniRule"/>
</dbReference>
<dbReference type="GO" id="GO:0008652">
    <property type="term" value="P:amino acid biosynthetic process"/>
    <property type="evidence" value="ECO:0007669"/>
    <property type="project" value="UniProtKB-KW"/>
</dbReference>
<dbReference type="GO" id="GO:0009073">
    <property type="term" value="P:aromatic amino acid family biosynthetic process"/>
    <property type="evidence" value="ECO:0007669"/>
    <property type="project" value="UniProtKB-KW"/>
</dbReference>
<dbReference type="GO" id="GO:0009423">
    <property type="term" value="P:chorismate biosynthetic process"/>
    <property type="evidence" value="ECO:0007669"/>
    <property type="project" value="UniProtKB-UniRule"/>
</dbReference>
<dbReference type="GO" id="GO:0019632">
    <property type="term" value="P:shikimate metabolic process"/>
    <property type="evidence" value="ECO:0007669"/>
    <property type="project" value="InterPro"/>
</dbReference>
<dbReference type="CDD" id="cd01065">
    <property type="entry name" value="NAD_bind_Shikimate_DH"/>
    <property type="match status" value="1"/>
</dbReference>
<dbReference type="FunFam" id="3.40.50.10860:FF:000006">
    <property type="entry name" value="Shikimate dehydrogenase (NADP(+))"/>
    <property type="match status" value="1"/>
</dbReference>
<dbReference type="Gene3D" id="3.40.50.10860">
    <property type="entry name" value="Leucine Dehydrogenase, chain A, domain 1"/>
    <property type="match status" value="1"/>
</dbReference>
<dbReference type="Gene3D" id="3.40.50.720">
    <property type="entry name" value="NAD(P)-binding Rossmann-like Domain"/>
    <property type="match status" value="1"/>
</dbReference>
<dbReference type="HAMAP" id="MF_00222">
    <property type="entry name" value="Shikimate_DH_AroE"/>
    <property type="match status" value="1"/>
</dbReference>
<dbReference type="InterPro" id="IPR046346">
    <property type="entry name" value="Aminoacid_DH-like_N_sf"/>
</dbReference>
<dbReference type="InterPro" id="IPR036291">
    <property type="entry name" value="NAD(P)-bd_dom_sf"/>
</dbReference>
<dbReference type="InterPro" id="IPR041121">
    <property type="entry name" value="SDH_C"/>
</dbReference>
<dbReference type="InterPro" id="IPR011342">
    <property type="entry name" value="Shikimate_DH"/>
</dbReference>
<dbReference type="InterPro" id="IPR013708">
    <property type="entry name" value="Shikimate_DH-bd_N"/>
</dbReference>
<dbReference type="InterPro" id="IPR022893">
    <property type="entry name" value="Shikimate_DH_fam"/>
</dbReference>
<dbReference type="InterPro" id="IPR006151">
    <property type="entry name" value="Shikm_DH/Glu-tRNA_Rdtase"/>
</dbReference>
<dbReference type="NCBIfam" id="TIGR00507">
    <property type="entry name" value="aroE"/>
    <property type="match status" value="1"/>
</dbReference>
<dbReference type="NCBIfam" id="NF001310">
    <property type="entry name" value="PRK00258.1-2"/>
    <property type="match status" value="1"/>
</dbReference>
<dbReference type="PANTHER" id="PTHR21089:SF1">
    <property type="entry name" value="BIFUNCTIONAL 3-DEHYDROQUINATE DEHYDRATASE_SHIKIMATE DEHYDROGENASE, CHLOROPLASTIC"/>
    <property type="match status" value="1"/>
</dbReference>
<dbReference type="PANTHER" id="PTHR21089">
    <property type="entry name" value="SHIKIMATE DEHYDROGENASE"/>
    <property type="match status" value="1"/>
</dbReference>
<dbReference type="Pfam" id="PF18317">
    <property type="entry name" value="SDH_C"/>
    <property type="match status" value="1"/>
</dbReference>
<dbReference type="Pfam" id="PF01488">
    <property type="entry name" value="Shikimate_DH"/>
    <property type="match status" value="1"/>
</dbReference>
<dbReference type="Pfam" id="PF08501">
    <property type="entry name" value="Shikimate_dh_N"/>
    <property type="match status" value="1"/>
</dbReference>
<dbReference type="SUPFAM" id="SSF53223">
    <property type="entry name" value="Aminoacid dehydrogenase-like, N-terminal domain"/>
    <property type="match status" value="1"/>
</dbReference>
<dbReference type="SUPFAM" id="SSF51735">
    <property type="entry name" value="NAD(P)-binding Rossmann-fold domains"/>
    <property type="match status" value="1"/>
</dbReference>
<sequence>MDKYAVIGHPIGHSKSPRIHALFAGQTGQDMAYEAVFAPLDGFADTVRRLVAEGYRGFNVTVPFKGEAFKLADALTDRARCAGAVNTLKVQDDGTLLGENTDGAGLVTDLVNNLGVAIAGRDLVVLGAGGAVRGVLAPLLALGPASLHIANRTGARAEQLARDFADLGPVTGGDLDSLMGRQAHVLINGTSAGLDDEVPPLPDDLLHADGGCYDMMYGDRPTAFLRWAAAHGAAWTADGLGMLVEQAAESFALWRGVRPQTGPVIQILRPVQP</sequence>
<proteinExistence type="inferred from homology"/>
<evidence type="ECO:0000255" key="1">
    <source>
        <dbReference type="HAMAP-Rule" id="MF_00222"/>
    </source>
</evidence>
<keyword id="KW-0028">Amino-acid biosynthesis</keyword>
<keyword id="KW-0057">Aromatic amino acid biosynthesis</keyword>
<keyword id="KW-0521">NADP</keyword>
<keyword id="KW-0560">Oxidoreductase</keyword>
<keyword id="KW-1185">Reference proteome</keyword>
<gene>
    <name evidence="1" type="primary">aroE</name>
    <name type="ordered locus">Tgr7_0119</name>
</gene>
<organism>
    <name type="scientific">Thioalkalivibrio sulfidiphilus (strain HL-EbGR7)</name>
    <dbReference type="NCBI Taxonomy" id="396588"/>
    <lineage>
        <taxon>Bacteria</taxon>
        <taxon>Pseudomonadati</taxon>
        <taxon>Pseudomonadota</taxon>
        <taxon>Gammaproteobacteria</taxon>
        <taxon>Chromatiales</taxon>
        <taxon>Ectothiorhodospiraceae</taxon>
        <taxon>Thioalkalivibrio</taxon>
    </lineage>
</organism>
<name>AROE_THISH</name>
<accession>B8GTG2</accession>
<feature type="chain" id="PRO_1000124902" description="Shikimate dehydrogenase (NADP(+))">
    <location>
        <begin position="1"/>
        <end position="273"/>
    </location>
</feature>
<feature type="active site" description="Proton acceptor" evidence="1">
    <location>
        <position position="65"/>
    </location>
</feature>
<feature type="binding site" evidence="1">
    <location>
        <begin position="14"/>
        <end position="16"/>
    </location>
    <ligand>
        <name>shikimate</name>
        <dbReference type="ChEBI" id="CHEBI:36208"/>
    </ligand>
</feature>
<feature type="binding site" evidence="1">
    <location>
        <position position="61"/>
    </location>
    <ligand>
        <name>shikimate</name>
        <dbReference type="ChEBI" id="CHEBI:36208"/>
    </ligand>
</feature>
<feature type="binding site" evidence="1">
    <location>
        <position position="77"/>
    </location>
    <ligand>
        <name>NADP(+)</name>
        <dbReference type="ChEBI" id="CHEBI:58349"/>
    </ligand>
</feature>
<feature type="binding site" evidence="1">
    <location>
        <position position="86"/>
    </location>
    <ligand>
        <name>shikimate</name>
        <dbReference type="ChEBI" id="CHEBI:36208"/>
    </ligand>
</feature>
<feature type="binding site" evidence="1">
    <location>
        <position position="102"/>
    </location>
    <ligand>
        <name>shikimate</name>
        <dbReference type="ChEBI" id="CHEBI:36208"/>
    </ligand>
</feature>
<feature type="binding site" evidence="1">
    <location>
        <begin position="127"/>
        <end position="131"/>
    </location>
    <ligand>
        <name>NADP(+)</name>
        <dbReference type="ChEBI" id="CHEBI:58349"/>
    </ligand>
</feature>
<feature type="binding site" evidence="1">
    <location>
        <begin position="151"/>
        <end position="156"/>
    </location>
    <ligand>
        <name>NADP(+)</name>
        <dbReference type="ChEBI" id="CHEBI:58349"/>
    </ligand>
</feature>
<feature type="binding site" evidence="1">
    <location>
        <position position="215"/>
    </location>
    <ligand>
        <name>NADP(+)</name>
        <dbReference type="ChEBI" id="CHEBI:58349"/>
    </ligand>
</feature>
<feature type="binding site" evidence="1">
    <location>
        <position position="217"/>
    </location>
    <ligand>
        <name>shikimate</name>
        <dbReference type="ChEBI" id="CHEBI:36208"/>
    </ligand>
</feature>
<feature type="binding site" evidence="1">
    <location>
        <position position="239"/>
    </location>
    <ligand>
        <name>NADP(+)</name>
        <dbReference type="ChEBI" id="CHEBI:58349"/>
    </ligand>
</feature>
<protein>
    <recommendedName>
        <fullName evidence="1">Shikimate dehydrogenase (NADP(+))</fullName>
        <shortName evidence="1">SDH</shortName>
        <ecNumber evidence="1">1.1.1.25</ecNumber>
    </recommendedName>
</protein>